<organismHost>
    <name type="scientific">Ornithodoros</name>
    <name type="common">relapsing fever ticks</name>
    <dbReference type="NCBI Taxonomy" id="6937"/>
</organismHost>
<organismHost>
    <name type="scientific">Phacochoerus aethiopicus</name>
    <name type="common">Warthog</name>
    <dbReference type="NCBI Taxonomy" id="85517"/>
</organismHost>
<organismHost>
    <name type="scientific">Phacochoerus africanus</name>
    <name type="common">Warthog</name>
    <dbReference type="NCBI Taxonomy" id="41426"/>
</organismHost>
<organismHost>
    <name type="scientific">Potamochoerus larvatus</name>
    <name type="common">Bushpig</name>
    <dbReference type="NCBI Taxonomy" id="273792"/>
</organismHost>
<organismHost>
    <name type="scientific">Sus scrofa</name>
    <name type="common">Pig</name>
    <dbReference type="NCBI Taxonomy" id="9823"/>
</organismHost>
<dbReference type="EMBL" id="AY261366">
    <property type="status" value="NOT_ANNOTATED_CDS"/>
    <property type="molecule type" value="Genomic_DNA"/>
</dbReference>
<dbReference type="Proteomes" id="UP000000858">
    <property type="component" value="Segment"/>
</dbReference>
<comment type="induction">
    <text evidence="2">Expressed in the early phase of the viral replicative cycle.</text>
</comment>
<comment type="similarity">
    <text evidence="2">Belongs to the asfivirus DP238L family.</text>
</comment>
<proteinExistence type="inferred from homology"/>
<evidence type="ECO:0000256" key="1">
    <source>
        <dbReference type="SAM" id="MobiDB-lite"/>
    </source>
</evidence>
<evidence type="ECO:0000305" key="2"/>
<protein>
    <recommendedName>
        <fullName>Uncharacterized protein DP238L</fullName>
    </recommendedName>
</protein>
<gene>
    <name type="ordered locus">War-157</name>
</gene>
<feature type="chain" id="PRO_0000373765" description="Uncharacterized protein DP238L">
    <location>
        <begin position="1"/>
        <end position="235"/>
    </location>
</feature>
<feature type="region of interest" description="Disordered" evidence="1">
    <location>
        <begin position="60"/>
        <end position="96"/>
    </location>
</feature>
<feature type="region of interest" description="Disordered" evidence="1">
    <location>
        <begin position="192"/>
        <end position="235"/>
    </location>
</feature>
<feature type="compositionally biased region" description="Polar residues" evidence="1">
    <location>
        <begin position="80"/>
        <end position="93"/>
    </location>
</feature>
<feature type="compositionally biased region" description="Acidic residues" evidence="1">
    <location>
        <begin position="197"/>
        <end position="214"/>
    </location>
</feature>
<keyword id="KW-0244">Early protein</keyword>
<reference key="1">
    <citation type="submission" date="2003-03" db="EMBL/GenBank/DDBJ databases">
        <title>African swine fever virus genomes.</title>
        <authorList>
            <person name="Kutish G.F."/>
            <person name="Rock D.L."/>
        </authorList>
    </citation>
    <scope>NUCLEOTIDE SEQUENCE [LARGE SCALE GENOMIC DNA]</scope>
</reference>
<organism>
    <name type="scientific">African swine fever virus (isolate Warthog/Namibia/Wart80/1980)</name>
    <name type="common">ASFV</name>
    <dbReference type="NCBI Taxonomy" id="561444"/>
    <lineage>
        <taxon>Viruses</taxon>
        <taxon>Varidnaviria</taxon>
        <taxon>Bamfordvirae</taxon>
        <taxon>Nucleocytoviricota</taxon>
        <taxon>Pokkesviricetes</taxon>
        <taxon>Asfuvirales</taxon>
        <taxon>Asfarviridae</taxon>
        <taxon>Asfivirus</taxon>
        <taxon>African swine fever virus</taxon>
    </lineage>
</organism>
<sequence>MAHGRNIRKRTFSVMDTLSDKNIGIHTNSLPKNILCRRILFKGKISKYSIFNDNLAKDHSSNRSMSIDSLTGKKRPHDISFQNMNSSMPSSTQKKTKILDEEIKDQSSSNENDRDSPVIVDITLKPSYMPKTSRITEIIHKMKELNMNRIEDGLSFNKKRSEHDAKNVLLHTMEMEEDCEIEEDIAIDSPYLNTSLSEDDTESIVETDYSEEEKESISETESSSDDESYSLYDSF</sequence>
<accession>P0CAN0</accession>
<name>VFD38_ASFWA</name>